<accession>Q8R4P5</accession>
<accession>Q7TQB2</accession>
<accession>Q9D435</accession>
<keyword id="KW-0002">3D-structure</keyword>
<keyword id="KW-0025">Alternative splicing</keyword>
<keyword id="KW-1003">Cell membrane</keyword>
<keyword id="KW-0209">Deafness</keyword>
<keyword id="KW-0225">Disease variant</keyword>
<keyword id="KW-1009">Hearing</keyword>
<keyword id="KW-0407">Ion channel</keyword>
<keyword id="KW-0406">Ion transport</keyword>
<keyword id="KW-0472">Membrane</keyword>
<keyword id="KW-0597">Phosphoprotein</keyword>
<keyword id="KW-1185">Reference proteome</keyword>
<keyword id="KW-0812">Transmembrane</keyword>
<keyword id="KW-1133">Transmembrane helix</keyword>
<keyword id="KW-0813">Transport</keyword>
<feature type="chain" id="PRO_0000185381" description="Transmembrane channel-like protein 1">
    <location>
        <begin position="1"/>
        <end position="757"/>
    </location>
</feature>
<feature type="topological domain" description="Cytoplasmic" evidence="20">
    <location>
        <begin position="1"/>
        <end position="176"/>
    </location>
</feature>
<feature type="transmembrane region" description="Helical" evidence="1">
    <location>
        <begin position="177"/>
        <end position="214"/>
    </location>
</feature>
<feature type="topological domain" description="Extracellular" evidence="20">
    <location>
        <begin position="215"/>
        <end position="265"/>
    </location>
</feature>
<feature type="transmembrane region" description="Helical" evidence="1">
    <location>
        <begin position="266"/>
        <end position="297"/>
    </location>
</feature>
<feature type="topological domain" description="Cytoplasmic" evidence="20">
    <location>
        <begin position="298"/>
        <end position="353"/>
    </location>
</feature>
<feature type="transmembrane region" description="Helical" evidence="1">
    <location>
        <begin position="354"/>
        <end position="384"/>
    </location>
</feature>
<feature type="topological domain" description="Extracellular" evidence="20">
    <location>
        <begin position="385"/>
        <end position="396"/>
    </location>
</feature>
<feature type="transmembrane region" description="Helical" evidence="1">
    <location>
        <begin position="397"/>
        <end position="424"/>
    </location>
</feature>
<feature type="topological domain" description="Cytoplasmic" evidence="20">
    <location>
        <begin position="425"/>
        <end position="428"/>
    </location>
</feature>
<feature type="transmembrane region" description="Helical" evidence="1">
    <location>
        <begin position="429"/>
        <end position="463"/>
    </location>
</feature>
<feature type="topological domain" description="Extracellular" evidence="21">
    <location>
        <begin position="464"/>
        <end position="512"/>
    </location>
</feature>
<feature type="transmembrane region" description="Helical" evidence="1">
    <location>
        <begin position="513"/>
        <end position="550"/>
    </location>
</feature>
<feature type="topological domain" description="Cytoplasmic" evidence="20">
    <location>
        <begin position="551"/>
        <end position="569"/>
    </location>
</feature>
<feature type="transmembrane region" description="Helical" evidence="1">
    <location>
        <begin position="570"/>
        <end position="590"/>
    </location>
</feature>
<feature type="topological domain" description="Extracellular" evidence="20">
    <location>
        <begin position="591"/>
        <end position="593"/>
    </location>
</feature>
<feature type="transmembrane region" description="Helical" evidence="1">
    <location>
        <begin position="594"/>
        <end position="616"/>
    </location>
</feature>
<feature type="topological domain" description="Cytoplasmic" evidence="20">
    <location>
        <begin position="617"/>
        <end position="630"/>
    </location>
</feature>
<feature type="transmembrane region" description="Helical" evidence="1">
    <location>
        <begin position="631"/>
        <end position="654"/>
    </location>
</feature>
<feature type="topological domain" description="Extracellular" evidence="20">
    <location>
        <begin position="655"/>
        <end position="697"/>
    </location>
</feature>
<feature type="transmembrane region" description="Helical" evidence="1">
    <location>
        <begin position="698"/>
        <end position="731"/>
    </location>
</feature>
<feature type="topological domain" description="Cytoplasmic" evidence="20">
    <location>
        <begin position="732"/>
        <end position="757"/>
    </location>
</feature>
<feature type="region of interest" description="Disordered" evidence="3">
    <location>
        <begin position="1"/>
        <end position="74"/>
    </location>
</feature>
<feature type="region of interest" description="Required for interaction with CIB2" evidence="11">
    <location>
        <begin position="81"/>
        <end position="130"/>
    </location>
</feature>
<feature type="region of interest" description="Required for interaction with CIB2" evidence="13">
    <location>
        <begin position="298"/>
        <end position="352"/>
    </location>
</feature>
<feature type="compositionally biased region" description="Acidic residues" evidence="3">
    <location>
        <begin position="8"/>
        <end position="23"/>
    </location>
</feature>
<feature type="compositionally biased region" description="Acidic residues" evidence="3">
    <location>
        <begin position="43"/>
        <end position="54"/>
    </location>
</feature>
<feature type="modified residue" description="Phosphoserine" evidence="2">
    <location>
        <position position="30"/>
    </location>
</feature>
<feature type="modified residue" description="Phosphothreonine" evidence="2">
    <location>
        <position position="38"/>
    </location>
</feature>
<feature type="modified residue" description="Phosphoserine" evidence="2">
    <location>
        <position position="122"/>
    </location>
</feature>
<feature type="modified residue" description="Phosphoserine" evidence="2">
    <location>
        <position position="308"/>
    </location>
</feature>
<feature type="modified residue" description="Phosphothreonine" evidence="2">
    <location>
        <position position="394"/>
    </location>
</feature>
<feature type="splice variant" id="VSP_006435" description="In isoform 2." evidence="18">
    <location>
        <begin position="1"/>
        <end position="545"/>
    </location>
</feature>
<feature type="splice variant" id="VSP_006436" description="In isoform 2." evidence="18">
    <original>FVRFCNYCWCWDLEYGY</original>
    <variation>MQQIPDALHSSPIALYE</variation>
    <location>
        <begin position="546"/>
        <end position="562"/>
    </location>
</feature>
<feature type="splice variant" id="VSP_006437" description="In isoform 2." evidence="18">
    <original>AAAAGGQ</original>
    <variation>GWRCGFVWRFCVPNSPYTLALPMRHSMARHHRPWELIPRFLPSIISDLPKHLSEALISFPWEWIKKKKKDGKFQ</variation>
    <location>
        <begin position="751"/>
        <end position="757"/>
    </location>
</feature>
<feature type="sequence variant" description="In BTH; reduced Ca(2+) permeability; no change in channel conductance." evidence="5 14">
    <original>M</original>
    <variation>K</variation>
    <location>
        <position position="412"/>
    </location>
</feature>
<feature type="mutagenesis site" description="Disrupts interaction with CIB2 and CIB3." evidence="13">
    <original>F</original>
    <variation>R</variation>
    <location>
        <position position="312"/>
    </location>
</feature>
<feature type="mutagenesis site" description="Disrupts interaction with CIB2 and CIB3." evidence="13">
    <original>W</original>
    <variation>D</variation>
    <location>
        <position position="315"/>
    </location>
</feature>
<feature type="mutagenesis site" description="Disrupts interaction with CIB2 and CIB3." evidence="13">
    <original>Y</original>
    <variation>A</variation>
    <location>
        <position position="317"/>
    </location>
</feature>
<feature type="mutagenesis site" description="No impact on interaction with CIB2 and CIB3." evidence="13">
    <original>N</original>
    <variation>K</variation>
    <location>
        <position position="321"/>
    </location>
</feature>
<feature type="mutagenesis site" description="No impact on interaction with CIB2 and CIB3." evidence="13">
    <original>E</original>
    <variation>K</variation>
    <location>
        <position position="323"/>
    </location>
</feature>
<feature type="mutagenesis site" description="Disrupts interaction with CIB2 and CIB3." evidence="13">
    <original>I</original>
    <variation>D</variation>
    <location>
        <position position="332"/>
    </location>
</feature>
<feature type="mutagenesis site" description="Disrupts interaction with CIB2 and CIB3." evidence="13">
    <original>F</original>
    <variation>D</variation>
    <location>
        <position position="336"/>
    </location>
</feature>
<feature type="mutagenesis site" description="No impact on interaction with CIB2 and CIB3." evidence="13">
    <original>K</original>
    <variation>Q</variation>
    <location>
        <position position="337"/>
    </location>
</feature>
<feature type="mutagenesis site" description="Reduced Ca(2+) permeability. No change in channel conductance." evidence="14">
    <original>T</original>
    <variation>K</variation>
    <location>
        <position position="416"/>
    </location>
</feature>
<feature type="mutagenesis site" description="Reduced sensory transduction current." evidence="12">
    <original>N</original>
    <variation>C</variation>
    <location>
        <position position="447"/>
    </location>
</feature>
<feature type="mutagenesis site" description="Reduced Ca(2+) permeability. Reduced channel conductance." evidence="14">
    <original>E</original>
    <variation>Q</variation>
    <location>
        <position position="520"/>
    </location>
</feature>
<feature type="mutagenesis site" description="Reduced sensory transduction current." evidence="12">
    <original>D</original>
    <variation>C</variation>
    <location>
        <position position="528"/>
    </location>
</feature>
<feature type="mutagenesis site" description="Reduced Ca(2+) permeability. Reduced channel conductance." evidence="14">
    <original>D</original>
    <variation>N</variation>
    <location>
        <position position="528"/>
    </location>
</feature>
<feature type="mutagenesis site" description="Reduced Ca(2+) permeability. Reduced channel expression without affecting conductance." evidence="14">
    <original>W</original>
    <variation>L</variation>
    <location>
        <position position="554"/>
    </location>
</feature>
<feature type="mutagenesis site" description="Reduced single-channel currents." evidence="12">
    <original>D</original>
    <variation>A</variation>
    <location>
        <position position="569"/>
    </location>
</feature>
<feature type="mutagenesis site" description="Reduced Ca(2+) permeability. Reduced channel expression without affecting conductance." evidence="14">
    <original>D</original>
    <variation>N</variation>
    <location>
        <position position="569"/>
    </location>
</feature>
<feature type="helix" evidence="24">
    <location>
        <begin position="306"/>
        <end position="312"/>
    </location>
</feature>
<feature type="helix" evidence="24">
    <location>
        <begin position="322"/>
        <end position="346"/>
    </location>
</feature>
<proteinExistence type="evidence at protein level"/>
<gene>
    <name evidence="22" type="primary">Tmc1</name>
    <name type="synonym">Bth</name>
    <name type="synonym">dn</name>
</gene>
<sequence>MLQIQVEEKEEDTEESSSEEEEDKLPRRESLRPKRKRTRDVINEDDPEPEPEDEETRKAREKERRRRLRRGAEEEEEIDEEELERLKALLDENRQMIATVKCKPWKMEKKIEVLKEAKKFVSENEGALGKGKGKKWFAFKMMMAKKWAKFLRDFENFKAACVPWENKIKAIESQFGSSVASYFLFLRWMYGVNMVLFVLTFSLIMLPEYLWGLPYGSLPRKTVPRAEEASAANFGVLYDFNGLAQYSVLFYGYYDNKRTIGWLNFRLPLSYFLVGIMCIGYSFLVVLKAMTKNIGDDGGGDDNTFNFSWKVFCSWDYLIGNPETADNKFNSITMNFKEAIIEERAAQVEENIHLIRFLRFLANFFVFLTLGASGYLIFWAVKRSQEFAQQDPDTLGWWEKNEMNMVMSLLGMFCPTLFDLFAELEDYHPLIALKWLLGRIFALLLGNLYVFILALMDEINNKIEEEKLVKANITLWEANMIKAYNESLSGLSGNTTGAPFFVHPADVPRGPCWETMVGQEFVRLTVSDVLTTYVTILIGDFLRACFVRFCNYCWCWDLEYGYPSYTEFDISGNVLALIFNQGMIWMGSFFAPSLPGINILRLHTSMYFQCWAVMCCNVPEARVFKASRSNNFYLGMLLLILFLSTMPVLYMIVSLPPSFDCGPFSGKNRMFEVIGETLEHDFPSWMAKILRQLSNPGLVIAVILVMVLTIYYLNATAKGQKAANLDLKKKMKQQALENKMRNKKMAAARAAAAAGGQ</sequence>
<dbReference type="EMBL" id="AF417579">
    <property type="protein sequence ID" value="AAL86400.1"/>
    <property type="molecule type" value="mRNA"/>
</dbReference>
<dbReference type="EMBL" id="AK016832">
    <property type="status" value="NOT_ANNOTATED_CDS"/>
    <property type="molecule type" value="mRNA"/>
</dbReference>
<dbReference type="EMBL" id="AY263155">
    <property type="protein sequence ID" value="AAP35263.1"/>
    <property type="molecule type" value="mRNA"/>
</dbReference>
<dbReference type="CCDS" id="CCDS50403.1">
    <molecule id="Q8R4P5-1"/>
</dbReference>
<dbReference type="RefSeq" id="NP_083229.1">
    <molecule id="Q8R4P5-1"/>
    <property type="nucleotide sequence ID" value="NM_028953.2"/>
</dbReference>
<dbReference type="PDB" id="6WUD">
    <property type="method" value="X-ray"/>
    <property type="resolution" value="1.84 A"/>
    <property type="chains" value="B=298-352"/>
</dbReference>
<dbReference type="PDB" id="8Z3F">
    <property type="method" value="X-ray"/>
    <property type="resolution" value="1.74 A"/>
    <property type="chains" value="B=81-130"/>
</dbReference>
<dbReference type="PDBsum" id="6WUD"/>
<dbReference type="PDBsum" id="8Z3F"/>
<dbReference type="SMR" id="Q8R4P5"/>
<dbReference type="BioGRID" id="199247">
    <property type="interactions" value="1"/>
</dbReference>
<dbReference type="CORUM" id="Q8R4P5"/>
<dbReference type="FunCoup" id="Q8R4P5">
    <property type="interactions" value="105"/>
</dbReference>
<dbReference type="STRING" id="10090.ENSMUSP00000040859"/>
<dbReference type="TCDB" id="1.A.17.4.6">
    <property type="family name" value="the calcium-dependent chloride channel (ca-clc) family"/>
</dbReference>
<dbReference type="iPTMnet" id="Q8R4P5"/>
<dbReference type="PhosphoSitePlus" id="Q8R4P5"/>
<dbReference type="PaxDb" id="10090-ENSMUSP00000040859"/>
<dbReference type="Antibodypedia" id="27012">
    <property type="antibodies" value="68 antibodies from 13 providers"/>
</dbReference>
<dbReference type="DNASU" id="13409"/>
<dbReference type="Ensembl" id="ENSMUST00000039500.4">
    <molecule id="Q8R4P5-1"/>
    <property type="protein sequence ID" value="ENSMUSP00000040859.4"/>
    <property type="gene ID" value="ENSMUSG00000024749.10"/>
</dbReference>
<dbReference type="GeneID" id="13409"/>
<dbReference type="KEGG" id="mmu:13409"/>
<dbReference type="UCSC" id="uc008gyo.1">
    <molecule id="Q8R4P5-2"/>
    <property type="organism name" value="mouse"/>
</dbReference>
<dbReference type="UCSC" id="uc008gyp.1">
    <molecule id="Q8R4P5-1"/>
    <property type="organism name" value="mouse"/>
</dbReference>
<dbReference type="AGR" id="MGI:2151016"/>
<dbReference type="CTD" id="117531"/>
<dbReference type="MGI" id="MGI:2151016">
    <property type="gene designation" value="Tmc1"/>
</dbReference>
<dbReference type="VEuPathDB" id="HostDB:ENSMUSG00000024749"/>
<dbReference type="eggNOG" id="ENOG502QQGX">
    <property type="taxonomic scope" value="Eukaryota"/>
</dbReference>
<dbReference type="GeneTree" id="ENSGT01050000244942"/>
<dbReference type="HOGENOM" id="CLU_013958_2_1_1"/>
<dbReference type="InParanoid" id="Q8R4P5"/>
<dbReference type="OMA" id="NFFALCT"/>
<dbReference type="OrthoDB" id="5831905at2759"/>
<dbReference type="PhylomeDB" id="Q8R4P5"/>
<dbReference type="TreeFam" id="TF313462"/>
<dbReference type="BioGRID-ORCS" id="13409">
    <property type="hits" value="4 hits in 76 CRISPR screens"/>
</dbReference>
<dbReference type="ChiTaRS" id="Tmc1">
    <property type="organism name" value="mouse"/>
</dbReference>
<dbReference type="PRO" id="PR:Q8R4P5"/>
<dbReference type="Proteomes" id="UP000000589">
    <property type="component" value="Chromosome 19"/>
</dbReference>
<dbReference type="RNAct" id="Q8R4P5">
    <property type="molecule type" value="protein"/>
</dbReference>
<dbReference type="Bgee" id="ENSMUSG00000024749">
    <property type="expression patterns" value="Expressed in spermatid and 37 other cell types or tissues"/>
</dbReference>
<dbReference type="ExpressionAtlas" id="Q8R4P5">
    <property type="expression patterns" value="baseline and differential"/>
</dbReference>
<dbReference type="GO" id="GO:0009897">
    <property type="term" value="C:external side of plasma membrane"/>
    <property type="evidence" value="ECO:0000314"/>
    <property type="project" value="MGI"/>
</dbReference>
<dbReference type="GO" id="GO:0005886">
    <property type="term" value="C:plasma membrane"/>
    <property type="evidence" value="ECO:0000304"/>
    <property type="project" value="Reactome"/>
</dbReference>
<dbReference type="GO" id="GO:0032420">
    <property type="term" value="C:stereocilium"/>
    <property type="evidence" value="ECO:0000314"/>
    <property type="project" value="UniProtKB"/>
</dbReference>
<dbReference type="GO" id="GO:0032426">
    <property type="term" value="C:stereocilium tip"/>
    <property type="evidence" value="ECO:0000314"/>
    <property type="project" value="MGI"/>
</dbReference>
<dbReference type="GO" id="GO:0005262">
    <property type="term" value="F:calcium channel activity"/>
    <property type="evidence" value="ECO:0000315"/>
    <property type="project" value="UniProtKB"/>
</dbReference>
<dbReference type="GO" id="GO:0008381">
    <property type="term" value="F:mechanosensitive monoatomic ion channel activity"/>
    <property type="evidence" value="ECO:0000315"/>
    <property type="project" value="UniProtKB"/>
</dbReference>
<dbReference type="GO" id="GO:0005245">
    <property type="term" value="F:voltage-gated calcium channel activity"/>
    <property type="evidence" value="ECO:0000315"/>
    <property type="project" value="MGI"/>
</dbReference>
<dbReference type="GO" id="GO:0060117">
    <property type="term" value="P:auditory receptor cell development"/>
    <property type="evidence" value="ECO:0000315"/>
    <property type="project" value="MGI"/>
</dbReference>
<dbReference type="GO" id="GO:0070588">
    <property type="term" value="P:calcium ion transmembrane transport"/>
    <property type="evidence" value="ECO:0000315"/>
    <property type="project" value="MGI"/>
</dbReference>
<dbReference type="GO" id="GO:0050910">
    <property type="term" value="P:detection of mechanical stimulus involved in sensory perception of sound"/>
    <property type="evidence" value="ECO:0000315"/>
    <property type="project" value="MGI"/>
</dbReference>
<dbReference type="GO" id="GO:1903169">
    <property type="term" value="P:regulation of calcium ion transmembrane transport"/>
    <property type="evidence" value="ECO:0000315"/>
    <property type="project" value="MGI"/>
</dbReference>
<dbReference type="GO" id="GO:0060005">
    <property type="term" value="P:vestibular reflex"/>
    <property type="evidence" value="ECO:0000315"/>
    <property type="project" value="MGI"/>
</dbReference>
<dbReference type="InterPro" id="IPR038900">
    <property type="entry name" value="TMC"/>
</dbReference>
<dbReference type="InterPro" id="IPR012496">
    <property type="entry name" value="TMC_dom"/>
</dbReference>
<dbReference type="PANTHER" id="PTHR23302:SF18">
    <property type="entry name" value="TRANSMEMBRANE CHANNEL-LIKE PROTEIN 1"/>
    <property type="match status" value="1"/>
</dbReference>
<dbReference type="PANTHER" id="PTHR23302">
    <property type="entry name" value="TRANSMEMBRANE CHANNEL-RELATED"/>
    <property type="match status" value="1"/>
</dbReference>
<dbReference type="Pfam" id="PF07810">
    <property type="entry name" value="TMC"/>
    <property type="match status" value="1"/>
</dbReference>
<evidence type="ECO:0000250" key="1">
    <source>
        <dbReference type="UniProtKB" id="D3KZG3"/>
    </source>
</evidence>
<evidence type="ECO:0000250" key="2">
    <source>
        <dbReference type="UniProtKB" id="Q8TDI8"/>
    </source>
</evidence>
<evidence type="ECO:0000256" key="3">
    <source>
        <dbReference type="SAM" id="MobiDB-lite"/>
    </source>
</evidence>
<evidence type="ECO:0000269" key="4">
    <source>
    </source>
</evidence>
<evidence type="ECO:0000269" key="5">
    <source>
    </source>
</evidence>
<evidence type="ECO:0000269" key="6">
    <source>
    </source>
</evidence>
<evidence type="ECO:0000269" key="7">
    <source>
    </source>
</evidence>
<evidence type="ECO:0000269" key="8">
    <source>
    </source>
</evidence>
<evidence type="ECO:0000269" key="9">
    <source>
    </source>
</evidence>
<evidence type="ECO:0000269" key="10">
    <source>
    </source>
</evidence>
<evidence type="ECO:0000269" key="11">
    <source>
    </source>
</evidence>
<evidence type="ECO:0000269" key="12">
    <source>
    </source>
</evidence>
<evidence type="ECO:0000269" key="13">
    <source>
    </source>
</evidence>
<evidence type="ECO:0000269" key="14">
    <source>
    </source>
</evidence>
<evidence type="ECO:0000269" key="15">
    <source>
    </source>
</evidence>
<evidence type="ECO:0000303" key="16">
    <source>
    </source>
</evidence>
<evidence type="ECO:0000303" key="17">
    <source>
    </source>
</evidence>
<evidence type="ECO:0000303" key="18">
    <source>
    </source>
</evidence>
<evidence type="ECO:0000303" key="19">
    <source>
    </source>
</evidence>
<evidence type="ECO:0000305" key="20"/>
<evidence type="ECO:0000305" key="21">
    <source>
    </source>
</evidence>
<evidence type="ECO:0000312" key="22">
    <source>
        <dbReference type="MGI" id="MGI:2151016"/>
    </source>
</evidence>
<evidence type="ECO:0007744" key="23">
    <source>
        <dbReference type="PDB" id="6WUD"/>
    </source>
</evidence>
<evidence type="ECO:0007829" key="24">
    <source>
        <dbReference type="PDB" id="6WUD"/>
    </source>
</evidence>
<organism>
    <name type="scientific">Mus musculus</name>
    <name type="common">Mouse</name>
    <dbReference type="NCBI Taxonomy" id="10090"/>
    <lineage>
        <taxon>Eukaryota</taxon>
        <taxon>Metazoa</taxon>
        <taxon>Chordata</taxon>
        <taxon>Craniata</taxon>
        <taxon>Vertebrata</taxon>
        <taxon>Euteleostomi</taxon>
        <taxon>Mammalia</taxon>
        <taxon>Eutheria</taxon>
        <taxon>Euarchontoglires</taxon>
        <taxon>Glires</taxon>
        <taxon>Rodentia</taxon>
        <taxon>Myomorpha</taxon>
        <taxon>Muroidea</taxon>
        <taxon>Muridae</taxon>
        <taxon>Murinae</taxon>
        <taxon>Mus</taxon>
        <taxon>Mus</taxon>
    </lineage>
</organism>
<protein>
    <recommendedName>
        <fullName evidence="19">Transmembrane channel-like protein 1</fullName>
    </recommendedName>
    <alternativeName>
        <fullName evidence="17">Beethoven protein</fullName>
    </alternativeName>
    <alternativeName>
        <fullName evidence="16">Deafness protein</fullName>
    </alternativeName>
    <alternativeName>
        <fullName evidence="17">Transmembrane cochlear-expressed protein 1</fullName>
    </alternativeName>
</protein>
<comment type="function">
    <text evidence="4 7 12 14">Pore-forming subunit of the mechanotransducer (MET) non-selective cation channel complex located at the tips of stereocilia of cochlear hair cells and that mediates sensory transduction in the auditory system (PubMed:11850618, PubMed:23871232, PubMed:30138589, PubMed:36191207). The MET complex is composed of two dimeric pore-forming ion-conducting transmembrane TMC (TMC1 or TMC2) subunits, several auxiliary proteins including LHFPL5, TMIE, CIB2/3 and TOMT, the tip-link PCDH15, and possibly the PIEZO subunits (PubMed:30138589, PubMed:36191207). MET channel is activated by tension in the tip-link extending from the side wall of one stereocilium to the tip of the adjacent shorter stereocilium, where the channel is located (PubMed:30138589, PubMed:36191207). TMC1 MET channel is highly permeable to calcium and likely transports monovalent cations (PubMed:23871232, PubMed:30138589, PubMed:36191207). Also involved in vestibular hair cells transduction current (PubMed:23871232).</text>
</comment>
<comment type="catalytic activity">
    <reaction evidence="7 12 14">
        <text>Ca(2+)(in) = Ca(2+)(out)</text>
        <dbReference type="Rhea" id="RHEA:29671"/>
        <dbReference type="ChEBI" id="CHEBI:29108"/>
    </reaction>
</comment>
<comment type="subunit">
    <text evidence="8 9 10 11 12 13 15">Forms the MET channel composed of TMC dimer (TMC1 or TMC2), TMIE, TOMT, CIB (CIB2 or CIB3), LHFPL5 and PCDH15 (PubMed:25114259, PubMed:28504928, PubMed:28534737, PubMed:28663585, PubMed:30138589, PubMed:34089643). Interacts with PIEZO1 and PIEZO2; the interaction may be part of the MET complex (PubMed:38228630). The interaction of TMC1 and TMC2 with TOMT is required for the transportation of TMC1/2 into the stereocilia of hair cells (PubMed:25114259, PubMed:28504928). Interacts (via N-terminus) with both isoforms CD1 and CD3 of PCDH15 (PubMed:25114259). Can form a heterodimer with TMC2, TMC5 or TMC7 (PubMed:30138589).</text>
</comment>
<comment type="subcellular location">
    <subcellularLocation>
        <location evidence="8 10">Cell membrane</location>
        <topology evidence="20">Multi-pass membrane protein</topology>
    </subcellularLocation>
    <text evidence="9 15">Localized to the stereocilia tips of the cochlear hair cells.</text>
</comment>
<comment type="alternative products">
    <event type="alternative splicing"/>
    <isoform>
        <id>Q8R4P5-1</id>
        <name>1</name>
        <sequence type="displayed"/>
    </isoform>
    <isoform>
        <id>Q8R4P5-2</id>
        <name>2</name>
        <sequence type="described" ref="VSP_006435 VSP_006436 VSP_006437"/>
    </isoform>
</comment>
<comment type="tissue specificity">
    <text evidence="6 15">Detected in cochlear inner and outer hair cells and in neurosensory epithelia of the vestibular end organs (PubMed:38228630). Also expressed in cortex, cerebellum, eye, colon, ovary and testis.</text>
</comment>
<comment type="developmental stage">
    <text>Expressed at low, constant levels in temporal bone from embryonic day 14 to day 1 after birth. Increases by 8 to 16-fold at day 5, 10 and 20 and continues to be expressed up to day 90.</text>
</comment>
<comment type="domain">
    <text evidence="12">TMC1 is structurally similar to TMEM16 channel and may include ten transmembrane (TM) domains with the ion-conducting pore placed between TM4 and TM7.</text>
</comment>
<comment type="disease">
    <text evidence="5 14">Defects in Tmc1 are the cause of the dominant deaf mutant Beethoven (BTH). Heterozygotes show progressive hair-cell degeneration from day 20 onwards, leading to severe depletion of inner hair cells and scattered loss of outer hair cells, and progressive loss of the Preyer reflex from around day 30. Homozygotes show almost complete degeneration of inner hair cells, and little or no Preyer reflex at any age.</text>
</comment>
<comment type="disease">
    <text evidence="4">Defects in Tmc1 are the cause of recessive deaf mutant dn. The dn mutant shows profound deafness with degeneration of the organ of Corti, stria vascularis, and occasionally the saccular macula, starting at about 10 days after birth (PubMed:11850618).</text>
</comment>
<comment type="disruption phenotype">
    <text evidence="7">Knockout mice show reduced transduction current amplitudes in inner hair cells relative to wild-type.</text>
</comment>
<comment type="similarity">
    <text evidence="20">Belongs to the TMC family.</text>
</comment>
<comment type="caution">
    <text evidence="15">A study questions the role of TMC1 and TMC2 as pore-forming subunit of the MET complex. Instead, they suggest PIEZO1/2 subunits to constitute the pore and TMC to act as regulatory component of the MET channel.</text>
</comment>
<name>TMC1_MOUSE</name>
<reference key="1">
    <citation type="journal article" date="2002" name="Nat. Genet.">
        <title>Dominant and recessive deafness caused by mutations of a novel gene, TMC1, required for cochlear hair-cell function.</title>
        <authorList>
            <person name="Kurima K."/>
            <person name="Peters L.M."/>
            <person name="Yang Y."/>
            <person name="Riazuddin S."/>
            <person name="Ahmed Z.M."/>
            <person name="Naz S."/>
            <person name="Arnaud D."/>
            <person name="Drury S."/>
            <person name="Mo J."/>
            <person name="Makishima T."/>
            <person name="Ghosh M."/>
            <person name="Menon P.S.N."/>
            <person name="Deshmukh D."/>
            <person name="Oddoux C."/>
            <person name="Ostrer H."/>
            <person name="Khan S."/>
            <person name="Raizuddin S."/>
            <person name="Deininger P.L."/>
            <person name="Hampton L.L."/>
            <person name="Sullivan S.L."/>
            <person name="Battey J.F."/>
            <person name="Keats B.J.B."/>
            <person name="Wilcox E.R."/>
            <person name="Friedman T.B."/>
            <person name="Griffith A.J."/>
        </authorList>
    </citation>
    <scope>NUCLEOTIDE SEQUENCE [MRNA] (ISOFORM 1)</scope>
    <scope>FUNCTION</scope>
    <scope>INVOLVEMENT IN DEAFNESS</scope>
    <source>
        <strain>BALB/cJ</strain>
        <tissue>Cochlea</tissue>
    </source>
</reference>
<reference key="2">
    <citation type="journal article" date="2005" name="Science">
        <title>The transcriptional landscape of the mammalian genome.</title>
        <authorList>
            <person name="Carninci P."/>
            <person name="Kasukawa T."/>
            <person name="Katayama S."/>
            <person name="Gough J."/>
            <person name="Frith M.C."/>
            <person name="Maeda N."/>
            <person name="Oyama R."/>
            <person name="Ravasi T."/>
            <person name="Lenhard B."/>
            <person name="Wells C."/>
            <person name="Kodzius R."/>
            <person name="Shimokawa K."/>
            <person name="Bajic V.B."/>
            <person name="Brenner S.E."/>
            <person name="Batalov S."/>
            <person name="Forrest A.R."/>
            <person name="Zavolan M."/>
            <person name="Davis M.J."/>
            <person name="Wilming L.G."/>
            <person name="Aidinis V."/>
            <person name="Allen J.E."/>
            <person name="Ambesi-Impiombato A."/>
            <person name="Apweiler R."/>
            <person name="Aturaliya R.N."/>
            <person name="Bailey T.L."/>
            <person name="Bansal M."/>
            <person name="Baxter L."/>
            <person name="Beisel K.W."/>
            <person name="Bersano T."/>
            <person name="Bono H."/>
            <person name="Chalk A.M."/>
            <person name="Chiu K.P."/>
            <person name="Choudhary V."/>
            <person name="Christoffels A."/>
            <person name="Clutterbuck D.R."/>
            <person name="Crowe M.L."/>
            <person name="Dalla E."/>
            <person name="Dalrymple B.P."/>
            <person name="de Bono B."/>
            <person name="Della Gatta G."/>
            <person name="di Bernardo D."/>
            <person name="Down T."/>
            <person name="Engstrom P."/>
            <person name="Fagiolini M."/>
            <person name="Faulkner G."/>
            <person name="Fletcher C.F."/>
            <person name="Fukushima T."/>
            <person name="Furuno M."/>
            <person name="Futaki S."/>
            <person name="Gariboldi M."/>
            <person name="Georgii-Hemming P."/>
            <person name="Gingeras T.R."/>
            <person name="Gojobori T."/>
            <person name="Green R.E."/>
            <person name="Gustincich S."/>
            <person name="Harbers M."/>
            <person name="Hayashi Y."/>
            <person name="Hensch T.K."/>
            <person name="Hirokawa N."/>
            <person name="Hill D."/>
            <person name="Huminiecki L."/>
            <person name="Iacono M."/>
            <person name="Ikeo K."/>
            <person name="Iwama A."/>
            <person name="Ishikawa T."/>
            <person name="Jakt M."/>
            <person name="Kanapin A."/>
            <person name="Katoh M."/>
            <person name="Kawasawa Y."/>
            <person name="Kelso J."/>
            <person name="Kitamura H."/>
            <person name="Kitano H."/>
            <person name="Kollias G."/>
            <person name="Krishnan S.P."/>
            <person name="Kruger A."/>
            <person name="Kummerfeld S.K."/>
            <person name="Kurochkin I.V."/>
            <person name="Lareau L.F."/>
            <person name="Lazarevic D."/>
            <person name="Lipovich L."/>
            <person name="Liu J."/>
            <person name="Liuni S."/>
            <person name="McWilliam S."/>
            <person name="Madan Babu M."/>
            <person name="Madera M."/>
            <person name="Marchionni L."/>
            <person name="Matsuda H."/>
            <person name="Matsuzawa S."/>
            <person name="Miki H."/>
            <person name="Mignone F."/>
            <person name="Miyake S."/>
            <person name="Morris K."/>
            <person name="Mottagui-Tabar S."/>
            <person name="Mulder N."/>
            <person name="Nakano N."/>
            <person name="Nakauchi H."/>
            <person name="Ng P."/>
            <person name="Nilsson R."/>
            <person name="Nishiguchi S."/>
            <person name="Nishikawa S."/>
            <person name="Nori F."/>
            <person name="Ohara O."/>
            <person name="Okazaki Y."/>
            <person name="Orlando V."/>
            <person name="Pang K.C."/>
            <person name="Pavan W.J."/>
            <person name="Pavesi G."/>
            <person name="Pesole G."/>
            <person name="Petrovsky N."/>
            <person name="Piazza S."/>
            <person name="Reed J."/>
            <person name="Reid J.F."/>
            <person name="Ring B.Z."/>
            <person name="Ringwald M."/>
            <person name="Rost B."/>
            <person name="Ruan Y."/>
            <person name="Salzberg S.L."/>
            <person name="Sandelin A."/>
            <person name="Schneider C."/>
            <person name="Schoenbach C."/>
            <person name="Sekiguchi K."/>
            <person name="Semple C.A."/>
            <person name="Seno S."/>
            <person name="Sessa L."/>
            <person name="Sheng Y."/>
            <person name="Shibata Y."/>
            <person name="Shimada H."/>
            <person name="Shimada K."/>
            <person name="Silva D."/>
            <person name="Sinclair B."/>
            <person name="Sperling S."/>
            <person name="Stupka E."/>
            <person name="Sugiura K."/>
            <person name="Sultana R."/>
            <person name="Takenaka Y."/>
            <person name="Taki K."/>
            <person name="Tammoja K."/>
            <person name="Tan S.L."/>
            <person name="Tang S."/>
            <person name="Taylor M.S."/>
            <person name="Tegner J."/>
            <person name="Teichmann S.A."/>
            <person name="Ueda H.R."/>
            <person name="van Nimwegen E."/>
            <person name="Verardo R."/>
            <person name="Wei C.L."/>
            <person name="Yagi K."/>
            <person name="Yamanishi H."/>
            <person name="Zabarovsky E."/>
            <person name="Zhu S."/>
            <person name="Zimmer A."/>
            <person name="Hide W."/>
            <person name="Bult C."/>
            <person name="Grimmond S.M."/>
            <person name="Teasdale R.D."/>
            <person name="Liu E.T."/>
            <person name="Brusic V."/>
            <person name="Quackenbush J."/>
            <person name="Wahlestedt C."/>
            <person name="Mattick J.S."/>
            <person name="Hume D.A."/>
            <person name="Kai C."/>
            <person name="Sasaki D."/>
            <person name="Tomaru Y."/>
            <person name="Fukuda S."/>
            <person name="Kanamori-Katayama M."/>
            <person name="Suzuki M."/>
            <person name="Aoki J."/>
            <person name="Arakawa T."/>
            <person name="Iida J."/>
            <person name="Imamura K."/>
            <person name="Itoh M."/>
            <person name="Kato T."/>
            <person name="Kawaji H."/>
            <person name="Kawagashira N."/>
            <person name="Kawashima T."/>
            <person name="Kojima M."/>
            <person name="Kondo S."/>
            <person name="Konno H."/>
            <person name="Nakano K."/>
            <person name="Ninomiya N."/>
            <person name="Nishio T."/>
            <person name="Okada M."/>
            <person name="Plessy C."/>
            <person name="Shibata K."/>
            <person name="Shiraki T."/>
            <person name="Suzuki S."/>
            <person name="Tagami M."/>
            <person name="Waki K."/>
            <person name="Watahiki A."/>
            <person name="Okamura-Oho Y."/>
            <person name="Suzuki H."/>
            <person name="Kawai J."/>
            <person name="Hayashizaki Y."/>
        </authorList>
    </citation>
    <scope>NUCLEOTIDE SEQUENCE [LARGE SCALE MRNA] (ISOFORM 2)</scope>
    <source>
        <strain>C57BL/6J</strain>
        <tissue>Testis</tissue>
    </source>
</reference>
<reference key="3">
    <citation type="journal article" date="2003" name="BMC Genomics">
        <title>TMC and EVER genes belong to a larger novel family, the TMC gene family encoding transmembrane proteins.</title>
        <authorList>
            <person name="Keresztes G."/>
            <person name="Mutai H."/>
            <person name="Heller S."/>
        </authorList>
    </citation>
    <scope>NUCLEOTIDE SEQUENCE [MRNA] OF 522-658</scope>
    <scope>TISSUE SPECIFICITY</scope>
    <source>
        <strain>C57BL/6J</strain>
    </source>
</reference>
<reference key="4">
    <citation type="journal article" date="2013" name="Neuron">
        <title>TMC1 and TMC2 are components of the mechanotransduction channel in hair cells of the mammalian inner ear.</title>
        <authorList>
            <person name="Pan B."/>
            <person name="Geleoc G.S."/>
            <person name="Asai Y."/>
            <person name="Horwitz G.C."/>
            <person name="Kurima K."/>
            <person name="Ishikawa K."/>
            <person name="Kawashima Y."/>
            <person name="Griffith A.J."/>
            <person name="Holt J.R."/>
        </authorList>
    </citation>
    <scope>FUNCTION</scope>
    <scope>TRANSPORTER ACTIVITY</scope>
    <scope>DISRUPTION PHENOTYPE</scope>
</reference>
<reference key="5">
    <citation type="journal article" date="2014" name="Proc. Natl. Acad. Sci. U.S.A.">
        <title>Tip-link protein protocadherin 15 interacts with transmembrane channel-like proteins TMC1 and TMC2.</title>
        <authorList>
            <person name="Maeda R."/>
            <person name="Kindt K.S."/>
            <person name="Mo W."/>
            <person name="Morgan C.P."/>
            <person name="Erickson T."/>
            <person name="Zhao H."/>
            <person name="Clemens-Grisham R."/>
            <person name="Barr-Gillespie P.G."/>
            <person name="Nicolson T."/>
        </authorList>
    </citation>
    <scope>INTERACTION WITH PCDH15</scope>
    <scope>SUBCELLULAR LOCATION</scope>
</reference>
<reference key="6">
    <citation type="journal article" date="2017" name="Elife">
        <title>The murine catecholamine methyltransferase mTOMT is essential for mechanotransduction by cochlear hair cells.</title>
        <authorList>
            <person name="Cunningham C.L."/>
            <person name="Wu Z."/>
            <person name="Jafari A."/>
            <person name="Zhao B."/>
            <person name="Schrode K."/>
            <person name="Harkins-Perry S."/>
            <person name="Lauer A."/>
            <person name="Mueller U."/>
        </authorList>
    </citation>
    <scope>INTERACTION WITH TOMT</scope>
    <scope>SUBCELLULAR LOCATION</scope>
</reference>
<reference key="7">
    <citation type="journal article" date="2017" name="Elife">
        <title>Integration of Tmc1/2 into the mechanotransduction complex in zebrafish hair cells is regulated by Transmembrane O-methyltransferase (Tomt).</title>
        <authorList>
            <person name="Erickson T."/>
            <person name="Morgan C.P."/>
            <person name="Olt J."/>
            <person name="Hardy K."/>
            <person name="Busch-Nentwich E."/>
            <person name="Maeda R."/>
            <person name="Clemens R."/>
            <person name="Krey J.F."/>
            <person name="Nechiporuk A."/>
            <person name="Barr-Gillespie P.G."/>
            <person name="Marcotti W."/>
            <person name="Nicolson T."/>
        </authorList>
    </citation>
    <scope>INTERACTION WITH TOMT</scope>
    <scope>SUBCELLULAR LOCATION</scope>
</reference>
<reference key="8">
    <citation type="journal article" date="2017" name="Nat. Commun.">
        <title>CIB2 interacts with TMC1 and TMC2 and is essential for mechanotransduction in auditory hair cells.</title>
        <authorList>
            <person name="Giese A.P.J."/>
            <person name="Tang Y.Q."/>
            <person name="Sinha G.P."/>
            <person name="Bowl M.R."/>
            <person name="Goldring A.C."/>
            <person name="Parker A."/>
            <person name="Freeman M.J."/>
            <person name="Brown S.D.M."/>
            <person name="Riazuddin S."/>
            <person name="Fettiplace R."/>
            <person name="Schafer W.R."/>
            <person name="Frolenkov G.I."/>
            <person name="Ahmed Z.M."/>
        </authorList>
    </citation>
    <scope>INTERACTION WITH CIB2</scope>
</reference>
<reference key="9">
    <citation type="journal article" date="2018" name="Neuron">
        <title>TMC1 Forms the Pore of Mechanosensory Transduction Channels in Vertebrate Inner Ear Hair Cells.</title>
        <authorList>
            <person name="Pan B."/>
            <person name="Akyuz N."/>
            <person name="Liu X.P."/>
            <person name="Asai Y."/>
            <person name="Nist-Lund C."/>
            <person name="Kurima K."/>
            <person name="Derfler B.H."/>
            <person name="Gyoergy B."/>
            <person name="Limapichat W."/>
            <person name="Walujkar S."/>
            <person name="Wimalasena L.N."/>
            <person name="Sotomayor M."/>
            <person name="Corey D.P."/>
            <person name="Holt J.R."/>
        </authorList>
    </citation>
    <scope>FUNCTION</scope>
    <scope>CATALYTIC ACTIVITY</scope>
    <scope>HOMODIMER</scope>
    <scope>INTERACTION WITH TMC2; TMC5 AND TMC7</scope>
    <scope>MUTAGENESIS OF ASN-447; ASP-528 AND ASP-569</scope>
</reference>
<reference key="10">
    <citation type="journal article" date="2022" name="Proc. Natl. Acad. Sci. U.S.A.">
        <title>The conductance and organization of the TMC1-containing mechanotransducer channel complex in auditory hair cells.</title>
        <authorList>
            <person name="Fettiplace R."/>
            <person name="Furness D.N."/>
            <person name="Beurg M."/>
        </authorList>
    </citation>
    <scope>FUNCTION</scope>
    <scope>CATALYTIC ACTIVITY</scope>
    <scope>MUTAGENESIS OF THR-416; GLU-520; ASP-528; TRP-554 AND ASP-569</scope>
    <scope>CHARACTERIZATION OF VARIANT LYS-412</scope>
</reference>
<reference key="11">
    <citation type="journal article" date="2024" name="Nat. Commun.">
        <title>The Piezo channel is a mechano-sensitive complex component in the mammalian inner ear hair cell.</title>
        <authorList>
            <person name="Lee J.H."/>
            <person name="Perez-Flores M.C."/>
            <person name="Park S."/>
            <person name="Kim H.J."/>
            <person name="Chen Y."/>
            <person name="Kang M."/>
            <person name="Kersigo J."/>
            <person name="Choi J."/>
            <person name="Thai P.N."/>
            <person name="Woltz R.L."/>
            <person name="Perez-Flores D.C."/>
            <person name="Perkins G."/>
            <person name="Sihn C.R."/>
            <person name="Trinh P."/>
            <person name="Zhang X.D."/>
            <person name="Sirish P."/>
            <person name="Dong Y."/>
            <person name="Feng W.W."/>
            <person name="Pessah I.N."/>
            <person name="Dixon R.E."/>
            <person name="Sokolowski B."/>
            <person name="Fritzsch B."/>
            <person name="Chiamvimonvat N."/>
            <person name="Yamoah E.N."/>
        </authorList>
    </citation>
    <scope>FUNCTION</scope>
    <scope>INTERACTION WITH PIEZO1 AND PIEZO2</scope>
    <scope>SUBCELLULAR LOCATION</scope>
    <scope>TISSUE SPECIFICITY</scope>
</reference>
<reference evidence="23" key="12">
    <citation type="journal article" date="2021" name="Neuron">
        <title>CIB2 and CIB3 are auxiliary subunits of the mechanotransduction channel of hair cells.</title>
        <authorList>
            <person name="Liang X."/>
            <person name="Qiu X."/>
            <person name="Dionne G."/>
            <person name="Cunningham C.L."/>
            <person name="Pucak M.L."/>
            <person name="Peng G."/>
            <person name="Kim Y.H."/>
            <person name="Lauer A."/>
            <person name="Shapiro L."/>
            <person name="Mueller U."/>
        </authorList>
    </citation>
    <scope>X-RAY CRYSTALLOGRAPHY (1.84 ANGSTROMS) OF 298-352 IN COMPLEX WITH HUMAN CIB3</scope>
    <scope>INTERACTION WITH CIB2 AND CIB3</scope>
    <scope>MUTAGENESIS OF PHE-312; TRP-315; TYR-317; ASN-321; GLU-323; ILE-332; PHE-336 AND LYS-337</scope>
</reference>
<reference key="13">
    <citation type="journal article" date="2002" name="Nat. Genet.">
        <title>Beethoven, a mouse model for dominant, progressive hearing loss DFNA36.</title>
        <authorList>
            <person name="Vreugde S."/>
            <person name="Erven A."/>
            <person name="Kros C.J."/>
            <person name="Marcotti W."/>
            <person name="Fuchs H."/>
            <person name="Kurima K."/>
            <person name="Wilcox E.R."/>
            <person name="Friedman T.B."/>
            <person name="Griffith A.J."/>
            <person name="Balling R."/>
            <person name="Hrabe de Angelis M."/>
            <person name="Avraham K.B."/>
            <person name="Steel K.P."/>
        </authorList>
    </citation>
    <scope>VARIANT BTH LYS-412</scope>
</reference>